<comment type="function">
    <text evidence="1">May act as an intracellular pH sensor that links chemotactic signals to responses in the microfilament system of the cells by nucleating actin polymerization or stabilizing the filaments.</text>
</comment>
<comment type="subcellular location">
    <subcellularLocation>
        <location>Cytoplasm</location>
    </subcellularLocation>
    <subcellularLocation>
        <location evidence="1">Cell membrane</location>
        <topology evidence="1">Lipid-anchor</topology>
        <orientation evidence="1">Cytoplasmic side</orientation>
    </subcellularLocation>
</comment>
<comment type="PTM">
    <text evidence="1">Phosphorylated.</text>
</comment>
<comment type="similarity">
    <text evidence="2">Belongs to the hisactophilin family.</text>
</comment>
<evidence type="ECO:0000250" key="1"/>
<evidence type="ECO:0000305" key="2"/>
<accession>Q54DM0</accession>
<name>HATC_DICDI</name>
<gene>
    <name type="primary">hatC</name>
    <name type="ORF">DDB_G0292136</name>
</gene>
<dbReference type="EMBL" id="AAFI02000187">
    <property type="protein sequence ID" value="EAL61424.1"/>
    <property type="molecule type" value="Genomic_DNA"/>
</dbReference>
<dbReference type="RefSeq" id="XP_629852.1">
    <property type="nucleotide sequence ID" value="XM_629850.1"/>
</dbReference>
<dbReference type="SMR" id="Q54DM0"/>
<dbReference type="FunCoup" id="Q54DM0">
    <property type="interactions" value="26"/>
</dbReference>
<dbReference type="STRING" id="44689.Q54DM0"/>
<dbReference type="PaxDb" id="44689-DDB0232313"/>
<dbReference type="EnsemblProtists" id="EAL61424">
    <property type="protein sequence ID" value="EAL61424"/>
    <property type="gene ID" value="DDB_G0292136"/>
</dbReference>
<dbReference type="GeneID" id="8628532"/>
<dbReference type="KEGG" id="ddi:DDB_G0292136"/>
<dbReference type="dictyBase" id="DDB_G0292136">
    <property type="gene designation" value="hatC"/>
</dbReference>
<dbReference type="VEuPathDB" id="AmoebaDB:DDB_G0292136"/>
<dbReference type="HOGENOM" id="CLU_2077490_0_0_1"/>
<dbReference type="InParanoid" id="Q54DM0"/>
<dbReference type="PhylomeDB" id="Q54DM0"/>
<dbReference type="PRO" id="PR:Q54DM0"/>
<dbReference type="Proteomes" id="UP000002195">
    <property type="component" value="Chromosome 6"/>
</dbReference>
<dbReference type="GO" id="GO:0015629">
    <property type="term" value="C:actin cytoskeleton"/>
    <property type="evidence" value="ECO:0000318"/>
    <property type="project" value="GO_Central"/>
</dbReference>
<dbReference type="GO" id="GO:0005829">
    <property type="term" value="C:cytosol"/>
    <property type="evidence" value="ECO:0000250"/>
    <property type="project" value="dictyBase"/>
</dbReference>
<dbReference type="GO" id="GO:0005886">
    <property type="term" value="C:plasma membrane"/>
    <property type="evidence" value="ECO:0000250"/>
    <property type="project" value="dictyBase"/>
</dbReference>
<dbReference type="GO" id="GO:0051015">
    <property type="term" value="F:actin filament binding"/>
    <property type="evidence" value="ECO:0000250"/>
    <property type="project" value="dictyBase"/>
</dbReference>
<dbReference type="GO" id="GO:0005504">
    <property type="term" value="F:fatty acid binding"/>
    <property type="evidence" value="ECO:0000250"/>
    <property type="project" value="dictyBase"/>
</dbReference>
<dbReference type="GO" id="GO:0030674">
    <property type="term" value="F:protein-macromolecule adaptor activity"/>
    <property type="evidence" value="ECO:0007669"/>
    <property type="project" value="InterPro"/>
</dbReference>
<dbReference type="GO" id="GO:0030041">
    <property type="term" value="P:actin filament polymerization"/>
    <property type="evidence" value="ECO:0000318"/>
    <property type="project" value="GO_Central"/>
</dbReference>
<dbReference type="CDD" id="cd23341">
    <property type="entry name" value="beta-trefoil_FSCN_HatAB"/>
    <property type="match status" value="1"/>
</dbReference>
<dbReference type="FunFam" id="2.80.10.50:FF:000112">
    <property type="entry name" value="Hisactophilin-1"/>
    <property type="match status" value="1"/>
</dbReference>
<dbReference type="Gene3D" id="2.80.10.50">
    <property type="match status" value="1"/>
</dbReference>
<dbReference type="InterPro" id="IPR008999">
    <property type="entry name" value="Actin-crosslinking"/>
</dbReference>
<dbReference type="InterPro" id="IPR022768">
    <property type="entry name" value="Fascin-like_dom"/>
</dbReference>
<dbReference type="InterPro" id="IPR052883">
    <property type="entry name" value="Hisactophilin"/>
</dbReference>
<dbReference type="PANTHER" id="PTHR33351">
    <property type="entry name" value="HISACTOPHILIN-1-RELATED"/>
    <property type="match status" value="1"/>
</dbReference>
<dbReference type="PANTHER" id="PTHR33351:SF1">
    <property type="entry name" value="IG-LIKE DOMAIN-CONTAINING PROTEIN-RELATED"/>
    <property type="match status" value="1"/>
</dbReference>
<dbReference type="Pfam" id="PF06268">
    <property type="entry name" value="Fascin"/>
    <property type="match status" value="1"/>
</dbReference>
<dbReference type="SUPFAM" id="SSF50405">
    <property type="entry name" value="Actin-crosslinking proteins"/>
    <property type="match status" value="1"/>
</dbReference>
<reference key="1">
    <citation type="journal article" date="2005" name="Nature">
        <title>The genome of the social amoeba Dictyostelium discoideum.</title>
        <authorList>
            <person name="Eichinger L."/>
            <person name="Pachebat J.A."/>
            <person name="Gloeckner G."/>
            <person name="Rajandream M.A."/>
            <person name="Sucgang R."/>
            <person name="Berriman M."/>
            <person name="Song J."/>
            <person name="Olsen R."/>
            <person name="Szafranski K."/>
            <person name="Xu Q."/>
            <person name="Tunggal B."/>
            <person name="Kummerfeld S."/>
            <person name="Madera M."/>
            <person name="Konfortov B.A."/>
            <person name="Rivero F."/>
            <person name="Bankier A.T."/>
            <person name="Lehmann R."/>
            <person name="Hamlin N."/>
            <person name="Davies R."/>
            <person name="Gaudet P."/>
            <person name="Fey P."/>
            <person name="Pilcher K."/>
            <person name="Chen G."/>
            <person name="Saunders D."/>
            <person name="Sodergren E.J."/>
            <person name="Davis P."/>
            <person name="Kerhornou A."/>
            <person name="Nie X."/>
            <person name="Hall N."/>
            <person name="Anjard C."/>
            <person name="Hemphill L."/>
            <person name="Bason N."/>
            <person name="Farbrother P."/>
            <person name="Desany B."/>
            <person name="Just E."/>
            <person name="Morio T."/>
            <person name="Rost R."/>
            <person name="Churcher C.M."/>
            <person name="Cooper J."/>
            <person name="Haydock S."/>
            <person name="van Driessche N."/>
            <person name="Cronin A."/>
            <person name="Goodhead I."/>
            <person name="Muzny D.M."/>
            <person name="Mourier T."/>
            <person name="Pain A."/>
            <person name="Lu M."/>
            <person name="Harper D."/>
            <person name="Lindsay R."/>
            <person name="Hauser H."/>
            <person name="James K.D."/>
            <person name="Quiles M."/>
            <person name="Madan Babu M."/>
            <person name="Saito T."/>
            <person name="Buchrieser C."/>
            <person name="Wardroper A."/>
            <person name="Felder M."/>
            <person name="Thangavelu M."/>
            <person name="Johnson D."/>
            <person name="Knights A."/>
            <person name="Loulseged H."/>
            <person name="Mungall K.L."/>
            <person name="Oliver K."/>
            <person name="Price C."/>
            <person name="Quail M.A."/>
            <person name="Urushihara H."/>
            <person name="Hernandez J."/>
            <person name="Rabbinowitsch E."/>
            <person name="Steffen D."/>
            <person name="Sanders M."/>
            <person name="Ma J."/>
            <person name="Kohara Y."/>
            <person name="Sharp S."/>
            <person name="Simmonds M.N."/>
            <person name="Spiegler S."/>
            <person name="Tivey A."/>
            <person name="Sugano S."/>
            <person name="White B."/>
            <person name="Walker D."/>
            <person name="Woodward J.R."/>
            <person name="Winckler T."/>
            <person name="Tanaka Y."/>
            <person name="Shaulsky G."/>
            <person name="Schleicher M."/>
            <person name="Weinstock G.M."/>
            <person name="Rosenthal A."/>
            <person name="Cox E.C."/>
            <person name="Chisholm R.L."/>
            <person name="Gibbs R.A."/>
            <person name="Loomis W.F."/>
            <person name="Platzer M."/>
            <person name="Kay R.R."/>
            <person name="Williams J.G."/>
            <person name="Dear P.H."/>
            <person name="Noegel A.A."/>
            <person name="Barrell B.G."/>
            <person name="Kuspa A."/>
        </authorList>
    </citation>
    <scope>NUCLEOTIDE SEQUENCE [LARGE SCALE GENOMIC DNA]</scope>
    <source>
        <strain>AX4</strain>
    </source>
</reference>
<protein>
    <recommendedName>
        <fullName>Hisactophilin-3</fullName>
    </recommendedName>
    <alternativeName>
        <fullName>Histidine-rich actin-binding protein 3</fullName>
    </alternativeName>
</protein>
<feature type="initiator methionine" description="Removed" evidence="1">
    <location>
        <position position="1"/>
    </location>
</feature>
<feature type="chain" id="PRO_0000319629" description="Hisactophilin-3">
    <location>
        <begin position="2"/>
        <end position="119"/>
    </location>
</feature>
<feature type="repeat" description="1">
    <location>
        <begin position="34"/>
        <end position="47"/>
    </location>
</feature>
<feature type="repeat" description="2">
    <location>
        <begin position="75"/>
        <end position="87"/>
    </location>
</feature>
<feature type="region of interest" description="Contains several HHXH repeats">
    <location>
        <begin position="8"/>
        <end position="110"/>
    </location>
</feature>
<feature type="region of interest" description="2 X 13 AA approximate repeats">
    <location>
        <begin position="34"/>
        <end position="87"/>
    </location>
</feature>
<feature type="lipid moiety-binding region" description="N-myristoyl glycine" evidence="1">
    <location>
        <position position="2"/>
    </location>
</feature>
<keyword id="KW-0009">Actin-binding</keyword>
<keyword id="KW-1003">Cell membrane</keyword>
<keyword id="KW-0963">Cytoplasm</keyword>
<keyword id="KW-0449">Lipoprotein</keyword>
<keyword id="KW-0472">Membrane</keyword>
<keyword id="KW-0519">Myristate</keyword>
<keyword id="KW-0597">Phosphoprotein</keyword>
<keyword id="KW-1185">Reference proteome</keyword>
<keyword id="KW-0677">Repeat</keyword>
<proteinExistence type="inferred from homology"/>
<organism>
    <name type="scientific">Dictyostelium discoideum</name>
    <name type="common">Social amoeba</name>
    <dbReference type="NCBI Taxonomy" id="44689"/>
    <lineage>
        <taxon>Eukaryota</taxon>
        <taxon>Amoebozoa</taxon>
        <taxon>Evosea</taxon>
        <taxon>Eumycetozoa</taxon>
        <taxon>Dictyostelia</taxon>
        <taxon>Dictyosteliales</taxon>
        <taxon>Dictyosteliaceae</taxon>
        <taxon>Dictyostelium</taxon>
    </lineage>
</organism>
<sequence>MGNRAFKSHHGHFLSAEDCKVKTHHGHHDHHTHFHVENHGHHKVAIRTHANKYVSINDNNDVYISHHFHGEHSLFHLEHHGGKVSIKGHNHYYIAADQHGSIYTTHHHHHDATFEEFIV</sequence>